<evidence type="ECO:0000255" key="1">
    <source>
        <dbReference type="HAMAP-Rule" id="MF_03054"/>
    </source>
</evidence>
<reference key="1">
    <citation type="journal article" date="2009" name="Nature">
        <title>Evolution of pathogenicity and sexual reproduction in eight Candida genomes.</title>
        <authorList>
            <person name="Butler G."/>
            <person name="Rasmussen M.D."/>
            <person name="Lin M.F."/>
            <person name="Santos M.A.S."/>
            <person name="Sakthikumar S."/>
            <person name="Munro C.A."/>
            <person name="Rheinbay E."/>
            <person name="Grabherr M."/>
            <person name="Forche A."/>
            <person name="Reedy J.L."/>
            <person name="Agrafioti I."/>
            <person name="Arnaud M.B."/>
            <person name="Bates S."/>
            <person name="Brown A.J.P."/>
            <person name="Brunke S."/>
            <person name="Costanzo M.C."/>
            <person name="Fitzpatrick D.A."/>
            <person name="de Groot P.W.J."/>
            <person name="Harris D."/>
            <person name="Hoyer L.L."/>
            <person name="Hube B."/>
            <person name="Klis F.M."/>
            <person name="Kodira C."/>
            <person name="Lennard N."/>
            <person name="Logue M.E."/>
            <person name="Martin R."/>
            <person name="Neiman A.M."/>
            <person name="Nikolaou E."/>
            <person name="Quail M.A."/>
            <person name="Quinn J."/>
            <person name="Santos M.C."/>
            <person name="Schmitzberger F.F."/>
            <person name="Sherlock G."/>
            <person name="Shah P."/>
            <person name="Silverstein K.A.T."/>
            <person name="Skrzypek M.S."/>
            <person name="Soll D."/>
            <person name="Staggs R."/>
            <person name="Stansfield I."/>
            <person name="Stumpf M.P.H."/>
            <person name="Sudbery P.E."/>
            <person name="Srikantha T."/>
            <person name="Zeng Q."/>
            <person name="Berman J."/>
            <person name="Berriman M."/>
            <person name="Heitman J."/>
            <person name="Gow N.A.R."/>
            <person name="Lorenz M.C."/>
            <person name="Birren B.W."/>
            <person name="Kellis M."/>
            <person name="Cuomo C.A."/>
        </authorList>
    </citation>
    <scope>NUCLEOTIDE SEQUENCE [LARGE SCALE GENOMIC DNA]</scope>
    <source>
        <strain>ATCC 11503 / BCRC 21390 / CBS 2605 / JCM 1781 / NBRC 1676 / NRRL YB-4239</strain>
    </source>
</reference>
<keyword id="KW-0963">Cytoplasm</keyword>
<keyword id="KW-1185">Reference proteome</keyword>
<keyword id="KW-0819">tRNA processing</keyword>
<sequence>MKSLEYLTETGIKCLKCDEGAIIKVRSDVYCKQCYLRFIRGKQRKQMSSDKYKVKYLRDGASHSTEKVLLAFSGGVSSLVLLDVLARLLEEQKNTHRDLQGFELVVANISESDGTNLESLLSSSSIMQTLLELVGNYEVSIKVKVVTPNIDPVFLRRIGVDYEFNTFANNLSIEEQSVSSLAEILRASPNRSSSEDLRDVIFHQELLRLAQSEGCGTIVYGHSMSRLAIEVLALTVKGRGSNVHSTILDRVEDYCGDQISIIYPFRDLFEYELREYAVLSDLMQYESAFAKYAVPKSKVSKNMTVREILSMYLDRWDESGYLSTASTVVKIGEKLTVPTSQNNSSTYCCDICAKKIYQDPKDWLQMITVNEPAPLVSDEERDYLHQYLTSHTDTISKSGEHVNLCYGCITAINGAGGDSGVIWPLQKDVKFDHGEKEKAKVLKEYSLE</sequence>
<name>CTU2_LODEL</name>
<feature type="chain" id="PRO_0000369297" description="Cytoplasmic tRNA 2-thiolation protein 2">
    <location>
        <begin position="1"/>
        <end position="448"/>
    </location>
</feature>
<comment type="function">
    <text evidence="1">Plays a central role in 2-thiolation of mcm(5)S(2)U at tRNA wobble positions of tRNA(Lys), tRNA(Glu) and tRNA(Gln). May act by forming a heterodimer with NCS6 that ligates sulfur from thiocarboxylated URM1 onto the uridine of tRNAs at wobble position. Prior mcm(5) tRNA modification by the elongator complex is required for 2-thiolation. May also be involved in protein urmylation.</text>
</comment>
<comment type="pathway">
    <text evidence="1">tRNA modification; 5-methoxycarbonylmethyl-2-thiouridine-tRNA biosynthesis.</text>
</comment>
<comment type="subcellular location">
    <subcellularLocation>
        <location evidence="1">Cytoplasm</location>
    </subcellularLocation>
</comment>
<comment type="similarity">
    <text evidence="1">Belongs to the CTU2/NCS2 family.</text>
</comment>
<accession>A5DSD3</accession>
<proteinExistence type="inferred from homology"/>
<gene>
    <name evidence="1" type="primary">NCS2</name>
    <name evidence="1" type="synonym">CTU2</name>
    <name type="ORF">LELG_00269</name>
</gene>
<organism>
    <name type="scientific">Lodderomyces elongisporus (strain ATCC 11503 / CBS 2605 / JCM 1781 / NBRC 1676 / NRRL YB-4239)</name>
    <name type="common">Yeast</name>
    <name type="synonym">Saccharomyces elongisporus</name>
    <dbReference type="NCBI Taxonomy" id="379508"/>
    <lineage>
        <taxon>Eukaryota</taxon>
        <taxon>Fungi</taxon>
        <taxon>Dikarya</taxon>
        <taxon>Ascomycota</taxon>
        <taxon>Saccharomycotina</taxon>
        <taxon>Pichiomycetes</taxon>
        <taxon>Debaryomycetaceae</taxon>
        <taxon>Candida/Lodderomyces clade</taxon>
        <taxon>Lodderomyces</taxon>
    </lineage>
</organism>
<dbReference type="EMBL" id="CH981524">
    <property type="protein sequence ID" value="EDK42091.1"/>
    <property type="molecule type" value="Genomic_DNA"/>
</dbReference>
<dbReference type="RefSeq" id="XP_001527749.1">
    <property type="nucleotide sequence ID" value="XM_001527699.1"/>
</dbReference>
<dbReference type="FunCoup" id="A5DSD3">
    <property type="interactions" value="187"/>
</dbReference>
<dbReference type="STRING" id="379508.A5DSD3"/>
<dbReference type="GeneID" id="5235476"/>
<dbReference type="KEGG" id="lel:PVL30_000264"/>
<dbReference type="VEuPathDB" id="FungiDB:LELG_00269"/>
<dbReference type="eggNOG" id="KOG2594">
    <property type="taxonomic scope" value="Eukaryota"/>
</dbReference>
<dbReference type="HOGENOM" id="CLU_024534_1_0_1"/>
<dbReference type="InParanoid" id="A5DSD3"/>
<dbReference type="OMA" id="KQRKQMM"/>
<dbReference type="OrthoDB" id="25129at2759"/>
<dbReference type="UniPathway" id="UPA00988"/>
<dbReference type="Proteomes" id="UP000001996">
    <property type="component" value="Unassembled WGS sequence"/>
</dbReference>
<dbReference type="GO" id="GO:0005829">
    <property type="term" value="C:cytosol"/>
    <property type="evidence" value="ECO:0000250"/>
    <property type="project" value="UniProtKB"/>
</dbReference>
<dbReference type="GO" id="GO:0016779">
    <property type="term" value="F:nucleotidyltransferase activity"/>
    <property type="evidence" value="ECO:0007669"/>
    <property type="project" value="UniProtKB-UniRule"/>
</dbReference>
<dbReference type="GO" id="GO:0016783">
    <property type="term" value="F:sulfurtransferase activity"/>
    <property type="evidence" value="ECO:0007669"/>
    <property type="project" value="TreeGrafter"/>
</dbReference>
<dbReference type="GO" id="GO:0000049">
    <property type="term" value="F:tRNA binding"/>
    <property type="evidence" value="ECO:0007669"/>
    <property type="project" value="InterPro"/>
</dbReference>
<dbReference type="GO" id="GO:0032447">
    <property type="term" value="P:protein urmylation"/>
    <property type="evidence" value="ECO:0007669"/>
    <property type="project" value="UniProtKB-UniRule"/>
</dbReference>
<dbReference type="GO" id="GO:0034227">
    <property type="term" value="P:tRNA thio-modification"/>
    <property type="evidence" value="ECO:0000250"/>
    <property type="project" value="UniProtKB"/>
</dbReference>
<dbReference type="GO" id="GO:0002143">
    <property type="term" value="P:tRNA wobble position uridine thiolation"/>
    <property type="evidence" value="ECO:0007669"/>
    <property type="project" value="TreeGrafter"/>
</dbReference>
<dbReference type="GO" id="GO:0002098">
    <property type="term" value="P:tRNA wobble uridine modification"/>
    <property type="evidence" value="ECO:0000250"/>
    <property type="project" value="UniProtKB"/>
</dbReference>
<dbReference type="FunFam" id="3.40.50.620:FF:000366">
    <property type="entry name" value="Cytoplasmic tRNA 2-thiolation protein 2"/>
    <property type="match status" value="1"/>
</dbReference>
<dbReference type="Gene3D" id="3.40.50.620">
    <property type="entry name" value="HUPs"/>
    <property type="match status" value="1"/>
</dbReference>
<dbReference type="HAMAP" id="MF_03054">
    <property type="entry name" value="CTU2"/>
    <property type="match status" value="1"/>
</dbReference>
<dbReference type="InterPro" id="IPR019407">
    <property type="entry name" value="CTU2"/>
</dbReference>
<dbReference type="InterPro" id="IPR014729">
    <property type="entry name" value="Rossmann-like_a/b/a_fold"/>
</dbReference>
<dbReference type="PANTHER" id="PTHR20882">
    <property type="entry name" value="CYTOPLASMIC TRNA 2-THIOLATION PROTEIN 2"/>
    <property type="match status" value="1"/>
</dbReference>
<dbReference type="PANTHER" id="PTHR20882:SF14">
    <property type="entry name" value="CYTOPLASMIC TRNA 2-THIOLATION PROTEIN 2"/>
    <property type="match status" value="1"/>
</dbReference>
<dbReference type="Pfam" id="PF10288">
    <property type="entry name" value="CTU2"/>
    <property type="match status" value="1"/>
</dbReference>
<dbReference type="SUPFAM" id="SSF52402">
    <property type="entry name" value="Adenine nucleotide alpha hydrolases-like"/>
    <property type="match status" value="1"/>
</dbReference>
<protein>
    <recommendedName>
        <fullName evidence="1">Cytoplasmic tRNA 2-thiolation protein 2</fullName>
    </recommendedName>
</protein>